<proteinExistence type="inferred from homology"/>
<reference key="1">
    <citation type="journal article" date="2005" name="Nature">
        <title>Initial sequence of the chimpanzee genome and comparison with the human genome.</title>
        <authorList>
            <consortium name="Chimpanzee sequencing and analysis consortium"/>
        </authorList>
    </citation>
    <scope>NUCLEOTIDE SEQUENCE [LARGE SCALE GENOMIC DNA]</scope>
</reference>
<reference key="2">
    <citation type="journal article" date="2005" name="Genetics">
        <title>Comparative genomics and diversifying selection of the clustered vertebrate protocadherin genes.</title>
        <authorList>
            <person name="Wu Q."/>
        </authorList>
    </citation>
    <scope>IDENTIFICATION</scope>
</reference>
<gene>
    <name type="primary">PCDHGA7</name>
</gene>
<dbReference type="RefSeq" id="NP_001076025.1">
    <property type="nucleotide sequence ID" value="NM_001082556.4"/>
</dbReference>
<dbReference type="SMR" id="Q5DRB3"/>
<dbReference type="FunCoup" id="Q5DRB3">
    <property type="interactions" value="116"/>
</dbReference>
<dbReference type="GlyCosmos" id="Q5DRB3">
    <property type="glycosylation" value="2 sites, No reported glycans"/>
</dbReference>
<dbReference type="GeneID" id="100034686"/>
<dbReference type="KEGG" id="ptr:100034686"/>
<dbReference type="CTD" id="56108"/>
<dbReference type="InParanoid" id="Q5DRB3"/>
<dbReference type="OrthoDB" id="11898at9604"/>
<dbReference type="Proteomes" id="UP000002277">
    <property type="component" value="Unplaced"/>
</dbReference>
<dbReference type="GO" id="GO:0005886">
    <property type="term" value="C:plasma membrane"/>
    <property type="evidence" value="ECO:0000318"/>
    <property type="project" value="GO_Central"/>
</dbReference>
<dbReference type="GO" id="GO:0005509">
    <property type="term" value="F:calcium ion binding"/>
    <property type="evidence" value="ECO:0007669"/>
    <property type="project" value="InterPro"/>
</dbReference>
<dbReference type="GO" id="GO:0007155">
    <property type="term" value="P:cell adhesion"/>
    <property type="evidence" value="ECO:0000318"/>
    <property type="project" value="GO_Central"/>
</dbReference>
<dbReference type="GO" id="GO:0007156">
    <property type="term" value="P:homophilic cell adhesion via plasma membrane adhesion molecules"/>
    <property type="evidence" value="ECO:0007669"/>
    <property type="project" value="InterPro"/>
</dbReference>
<dbReference type="GO" id="GO:0007399">
    <property type="term" value="P:nervous system development"/>
    <property type="evidence" value="ECO:0007669"/>
    <property type="project" value="UniProtKB-ARBA"/>
</dbReference>
<dbReference type="CDD" id="cd11304">
    <property type="entry name" value="Cadherin_repeat"/>
    <property type="match status" value="6"/>
</dbReference>
<dbReference type="FunFam" id="2.60.40.60:FF:000004">
    <property type="entry name" value="Protocadherin 1 gamma 2"/>
    <property type="match status" value="1"/>
</dbReference>
<dbReference type="FunFam" id="2.60.40.60:FF:000001">
    <property type="entry name" value="Protocadherin alpha 2"/>
    <property type="match status" value="1"/>
</dbReference>
<dbReference type="FunFam" id="2.60.40.60:FF:000002">
    <property type="entry name" value="Protocadherin alpha 2"/>
    <property type="match status" value="1"/>
</dbReference>
<dbReference type="FunFam" id="2.60.40.60:FF:000006">
    <property type="entry name" value="Protocadherin alpha 2"/>
    <property type="match status" value="1"/>
</dbReference>
<dbReference type="FunFam" id="2.60.40.60:FF:000129">
    <property type="entry name" value="protocadherin alpha-C2 isoform X1"/>
    <property type="match status" value="1"/>
</dbReference>
<dbReference type="FunFam" id="2.60.40.60:FF:000018">
    <property type="entry name" value="Protocadherin gamma c3"/>
    <property type="match status" value="1"/>
</dbReference>
<dbReference type="Gene3D" id="2.60.40.60">
    <property type="entry name" value="Cadherins"/>
    <property type="match status" value="6"/>
</dbReference>
<dbReference type="InterPro" id="IPR002126">
    <property type="entry name" value="Cadherin-like_dom"/>
</dbReference>
<dbReference type="InterPro" id="IPR015919">
    <property type="entry name" value="Cadherin-like_sf"/>
</dbReference>
<dbReference type="InterPro" id="IPR032455">
    <property type="entry name" value="Cadherin_C"/>
</dbReference>
<dbReference type="InterPro" id="IPR031904">
    <property type="entry name" value="Cadherin_CBD"/>
</dbReference>
<dbReference type="InterPro" id="IPR020894">
    <property type="entry name" value="Cadherin_CS"/>
</dbReference>
<dbReference type="InterPro" id="IPR013164">
    <property type="entry name" value="Cadherin_N"/>
</dbReference>
<dbReference type="InterPro" id="IPR050174">
    <property type="entry name" value="Protocadherin/Cadherin-CA"/>
</dbReference>
<dbReference type="PANTHER" id="PTHR24028">
    <property type="entry name" value="CADHERIN-87A"/>
    <property type="match status" value="1"/>
</dbReference>
<dbReference type="PANTHER" id="PTHR24028:SF56">
    <property type="entry name" value="PROTOCADHERIN GAMMA-A7"/>
    <property type="match status" value="1"/>
</dbReference>
<dbReference type="Pfam" id="PF00028">
    <property type="entry name" value="Cadherin"/>
    <property type="match status" value="5"/>
</dbReference>
<dbReference type="Pfam" id="PF08266">
    <property type="entry name" value="Cadherin_2"/>
    <property type="match status" value="1"/>
</dbReference>
<dbReference type="Pfam" id="PF16492">
    <property type="entry name" value="Cadherin_C_2"/>
    <property type="match status" value="1"/>
</dbReference>
<dbReference type="Pfam" id="PF15974">
    <property type="entry name" value="Cadherin_tail"/>
    <property type="match status" value="1"/>
</dbReference>
<dbReference type="PRINTS" id="PR00205">
    <property type="entry name" value="CADHERIN"/>
</dbReference>
<dbReference type="SMART" id="SM00112">
    <property type="entry name" value="CA"/>
    <property type="match status" value="6"/>
</dbReference>
<dbReference type="SUPFAM" id="SSF49313">
    <property type="entry name" value="Cadherin-like"/>
    <property type="match status" value="6"/>
</dbReference>
<dbReference type="PROSITE" id="PS00232">
    <property type="entry name" value="CADHERIN_1"/>
    <property type="match status" value="4"/>
</dbReference>
<dbReference type="PROSITE" id="PS50268">
    <property type="entry name" value="CADHERIN_2"/>
    <property type="match status" value="6"/>
</dbReference>
<keyword id="KW-0106">Calcium</keyword>
<keyword id="KW-0130">Cell adhesion</keyword>
<keyword id="KW-1003">Cell membrane</keyword>
<keyword id="KW-0325">Glycoprotein</keyword>
<keyword id="KW-0472">Membrane</keyword>
<keyword id="KW-1185">Reference proteome</keyword>
<keyword id="KW-0677">Repeat</keyword>
<keyword id="KW-0732">Signal</keyword>
<keyword id="KW-0812">Transmembrane</keyword>
<keyword id="KW-1133">Transmembrane helix</keyword>
<evidence type="ECO:0000250" key="1"/>
<evidence type="ECO:0000255" key="2"/>
<evidence type="ECO:0000255" key="3">
    <source>
        <dbReference type="PROSITE-ProRule" id="PRU00043"/>
    </source>
</evidence>
<evidence type="ECO:0000256" key="4">
    <source>
        <dbReference type="SAM" id="MobiDB-lite"/>
    </source>
</evidence>
<organism>
    <name type="scientific">Pan troglodytes</name>
    <name type="common">Chimpanzee</name>
    <dbReference type="NCBI Taxonomy" id="9598"/>
    <lineage>
        <taxon>Eukaryota</taxon>
        <taxon>Metazoa</taxon>
        <taxon>Chordata</taxon>
        <taxon>Craniata</taxon>
        <taxon>Vertebrata</taxon>
        <taxon>Euteleostomi</taxon>
        <taxon>Mammalia</taxon>
        <taxon>Eutheria</taxon>
        <taxon>Euarchontoglires</taxon>
        <taxon>Primates</taxon>
        <taxon>Haplorrhini</taxon>
        <taxon>Catarrhini</taxon>
        <taxon>Hominidae</taxon>
        <taxon>Pan</taxon>
    </lineage>
</organism>
<sequence length="932" mass="101557">MAAQPRGGDCRGFVLLSILLGTPWEAWAGRILYSVSEETDKGSFVGDIAKDLGLEPRELAERGVRIISRGRTQLFALNQRSGSLVTAGRIDREEICAQSARCLVNFNILMEDKMNLYPIDVEIIDINDNVPRFLTEEINVKIMENTAPGVRFPLSEAGDPDVGTNSLQSYQLSPNRHFSLAVQSGDDGTKYPELVLERVLDREEERVHHLVLTASDGGDPPRSSTAHIQVTVVDVNDHTPVFSLPQYQVTVPENVPVGTRLLTVHAIDLDEGVNGEVTYSFRKITPKLPQMFHLNSLTGEISTLEGLDYEETAFYEMEVQAQDGPGSLTKAKVLITVLDVNDNAPEVTMTSLSSSIPEDTPLGTVIALFYLQDRDSGKNGEVTCTIPENLPFKLEKSIDNYYRLVTTKNLDRETLSLYNITLKATDGGTPPLSRETHIFMQVADTNDNPPTFPHSSYSVYIAENNPRGASIFLVTAQDHDSEDNAQITYSLAEDTIQGAPVSSYVSINSDTGVLYALQSFDYEQLRELQLRVTAHDSGDPPLSSNMSLSLFVLDQNDNPPEILYPALPTDGSTGMELAPRSAEPGYLVTKVVAVDKDSGQNAWLSYLLLKASEPGLFAVGLYTGEVRTARALLDRDALKQSLVVAVQDHGQPPLSATVTLTVAVADSIPEVLADLGSLEPSDGPYNYDLTLYLVVAVAAVSCVFLAFVLVLLALRLRRWHKSRLLQASEGGLASVPTSHFVGMDRVQAFLQTYSHEVSLTADSRKSHLIFPQPNYVDMLISQESCEKNDSLLTSVDFQECKDDVPSIQQAPPNTDWRFSQAQRPGTSGSQNGDDTGTWPNNQFDTEMLQAMILASASEAADGSSTLGGGAGTMGLSARYGPQFTLQHVPDYRQNVYIPGSNATLTNAAGKRDGKAPAGGNGNKKKSGKKEKK</sequence>
<comment type="function">
    <text>Potential calcium-dependent cell-adhesion protein. May be involved in the establishment and maintenance of specific neuronal connections in the brain.</text>
</comment>
<comment type="subcellular location">
    <subcellularLocation>
        <location evidence="1">Cell membrane</location>
        <topology evidence="1">Single-pass type I membrane protein</topology>
    </subcellularLocation>
</comment>
<accession>Q5DRB3</accession>
<feature type="signal peptide" evidence="2">
    <location>
        <begin position="1"/>
        <end position="28"/>
    </location>
</feature>
<feature type="chain" id="PRO_0000003961" description="Protocadherin gamma-A7">
    <location>
        <begin position="29"/>
        <end position="932"/>
    </location>
</feature>
<feature type="topological domain" description="Extracellular" evidence="2">
    <location>
        <begin position="29"/>
        <end position="692"/>
    </location>
</feature>
<feature type="transmembrane region" description="Helical" evidence="2">
    <location>
        <begin position="693"/>
        <end position="713"/>
    </location>
</feature>
<feature type="topological domain" description="Cytoplasmic" evidence="2">
    <location>
        <begin position="714"/>
        <end position="932"/>
    </location>
</feature>
<feature type="domain" description="Cadherin 1" evidence="3">
    <location>
        <begin position="29"/>
        <end position="133"/>
    </location>
</feature>
<feature type="domain" description="Cadherin 2" evidence="3">
    <location>
        <begin position="134"/>
        <end position="242"/>
    </location>
</feature>
<feature type="domain" description="Cadherin 3" evidence="3">
    <location>
        <begin position="243"/>
        <end position="347"/>
    </location>
</feature>
<feature type="domain" description="Cadherin 4" evidence="3">
    <location>
        <begin position="348"/>
        <end position="452"/>
    </location>
</feature>
<feature type="domain" description="Cadherin 5" evidence="3">
    <location>
        <begin position="453"/>
        <end position="562"/>
    </location>
</feature>
<feature type="domain" description="Cadherin 6" evidence="3">
    <location>
        <begin position="570"/>
        <end position="682"/>
    </location>
</feature>
<feature type="region of interest" description="Disordered" evidence="4">
    <location>
        <begin position="804"/>
        <end position="841"/>
    </location>
</feature>
<feature type="region of interest" description="Disordered" evidence="4">
    <location>
        <begin position="902"/>
        <end position="932"/>
    </location>
</feature>
<feature type="compositionally biased region" description="Polar residues" evidence="4">
    <location>
        <begin position="806"/>
        <end position="841"/>
    </location>
</feature>
<feature type="compositionally biased region" description="Basic residues" evidence="4">
    <location>
        <begin position="922"/>
        <end position="932"/>
    </location>
</feature>
<feature type="glycosylation site" description="N-linked (GlcNAc...) asparagine" evidence="2">
    <location>
        <position position="419"/>
    </location>
</feature>
<feature type="glycosylation site" description="N-linked (GlcNAc...) asparagine" evidence="2">
    <location>
        <position position="545"/>
    </location>
</feature>
<name>PCDG7_PANTR</name>
<protein>
    <recommendedName>
        <fullName>Protocadherin gamma-A7</fullName>
        <shortName>PCDH-gamma-A7</shortName>
    </recommendedName>
</protein>